<evidence type="ECO:0000250" key="1">
    <source>
        <dbReference type="UniProtKB" id="P38803"/>
    </source>
</evidence>
<evidence type="ECO:0000256" key="2">
    <source>
        <dbReference type="SAM" id="MobiDB-lite"/>
    </source>
</evidence>
<evidence type="ECO:0000305" key="3"/>
<dbReference type="EMBL" id="CP017630">
    <property type="protein sequence ID" value="AOW31132.1"/>
    <property type="molecule type" value="Genomic_DNA"/>
</dbReference>
<dbReference type="RefSeq" id="XP_710023.2">
    <property type="nucleotide sequence ID" value="XM_704931.2"/>
</dbReference>
<dbReference type="SMR" id="Q59JU3"/>
<dbReference type="FunCoup" id="Q59JU3">
    <property type="interactions" value="263"/>
</dbReference>
<dbReference type="STRING" id="237561.Q59JU3"/>
<dbReference type="EnsemblFungi" id="CR_03940W_A-T">
    <property type="protein sequence ID" value="CR_03940W_A-T-p1"/>
    <property type="gene ID" value="CR_03940W_A"/>
</dbReference>
<dbReference type="GeneID" id="3648378"/>
<dbReference type="KEGG" id="cal:CAALFM_CR03940WA"/>
<dbReference type="CGD" id="CAL0000179551">
    <property type="gene designation" value="orf19.8106"/>
</dbReference>
<dbReference type="VEuPathDB" id="FungiDB:CR_03940W_A"/>
<dbReference type="eggNOG" id="KOG2149">
    <property type="taxonomic scope" value="Eukaryota"/>
</dbReference>
<dbReference type="HOGENOM" id="CLU_050252_2_0_1"/>
<dbReference type="InParanoid" id="Q59JU3"/>
<dbReference type="OrthoDB" id="361362at2759"/>
<dbReference type="Proteomes" id="UP000000559">
    <property type="component" value="Chromosome R"/>
</dbReference>
<dbReference type="GO" id="GO:0005634">
    <property type="term" value="C:nucleus"/>
    <property type="evidence" value="ECO:0000318"/>
    <property type="project" value="GO_Central"/>
</dbReference>
<dbReference type="GO" id="GO:0120330">
    <property type="term" value="C:rixosome complex"/>
    <property type="evidence" value="ECO:0000318"/>
    <property type="project" value="GO_Central"/>
</dbReference>
<dbReference type="GO" id="GO:0006364">
    <property type="term" value="P:rRNA processing"/>
    <property type="evidence" value="ECO:0000318"/>
    <property type="project" value="GO_Central"/>
</dbReference>
<dbReference type="Gene3D" id="1.25.10.10">
    <property type="entry name" value="Leucine-rich Repeat Variant"/>
    <property type="match status" value="1"/>
</dbReference>
<dbReference type="InterPro" id="IPR011989">
    <property type="entry name" value="ARM-like"/>
</dbReference>
<dbReference type="InterPro" id="IPR016024">
    <property type="entry name" value="ARM-type_fold"/>
</dbReference>
<dbReference type="InterPro" id="IPR024679">
    <property type="entry name" value="Ipi1_N"/>
</dbReference>
<dbReference type="PANTHER" id="PTHR16056">
    <property type="entry name" value="REGULATOR OF MICROTUBULE DYNAMICS PROTEIN"/>
    <property type="match status" value="1"/>
</dbReference>
<dbReference type="PANTHER" id="PTHR16056:SF2">
    <property type="entry name" value="TESTIS-EXPRESSED PROTEIN 10"/>
    <property type="match status" value="1"/>
</dbReference>
<dbReference type="Pfam" id="PF12333">
    <property type="entry name" value="Ipi1_N"/>
    <property type="match status" value="1"/>
</dbReference>
<dbReference type="SUPFAM" id="SSF48371">
    <property type="entry name" value="ARM repeat"/>
    <property type="match status" value="1"/>
</dbReference>
<name>IPI1_CANAL</name>
<reference key="1">
    <citation type="journal article" date="2004" name="Proc. Natl. Acad. Sci. U.S.A.">
        <title>The diploid genome sequence of Candida albicans.</title>
        <authorList>
            <person name="Jones T."/>
            <person name="Federspiel N.A."/>
            <person name="Chibana H."/>
            <person name="Dungan J."/>
            <person name="Kalman S."/>
            <person name="Magee B.B."/>
            <person name="Newport G."/>
            <person name="Thorstenson Y.R."/>
            <person name="Agabian N."/>
            <person name="Magee P.T."/>
            <person name="Davis R.W."/>
            <person name="Scherer S."/>
        </authorList>
    </citation>
    <scope>NUCLEOTIDE SEQUENCE [LARGE SCALE GENOMIC DNA]</scope>
    <source>
        <strain>SC5314 / ATCC MYA-2876</strain>
    </source>
</reference>
<reference key="2">
    <citation type="journal article" date="2007" name="Genome Biol.">
        <title>Assembly of the Candida albicans genome into sixteen supercontigs aligned on the eight chromosomes.</title>
        <authorList>
            <person name="van het Hoog M."/>
            <person name="Rast T.J."/>
            <person name="Martchenko M."/>
            <person name="Grindle S."/>
            <person name="Dignard D."/>
            <person name="Hogues H."/>
            <person name="Cuomo C."/>
            <person name="Berriman M."/>
            <person name="Scherer S."/>
            <person name="Magee B.B."/>
            <person name="Whiteway M."/>
            <person name="Chibana H."/>
            <person name="Nantel A."/>
            <person name="Magee P.T."/>
        </authorList>
    </citation>
    <scope>GENOME REANNOTATION</scope>
    <source>
        <strain>SC5314 / ATCC MYA-2876</strain>
    </source>
</reference>
<reference key="3">
    <citation type="journal article" date="2013" name="Genome Biol.">
        <title>Assembly of a phased diploid Candida albicans genome facilitates allele-specific measurements and provides a simple model for repeat and indel structure.</title>
        <authorList>
            <person name="Muzzey D."/>
            <person name="Schwartz K."/>
            <person name="Weissman J.S."/>
            <person name="Sherlock G."/>
        </authorList>
    </citation>
    <scope>NUCLEOTIDE SEQUENCE [LARGE SCALE GENOMIC DNA]</scope>
    <scope>GENOME REANNOTATION</scope>
    <source>
        <strain>SC5314 / ATCC MYA-2876</strain>
    </source>
</reference>
<accession>Q59JU3</accession>
<accession>A0A1D8PSM0</accession>
<accession>Q5A6S9</accession>
<proteinExistence type="inferred from homology"/>
<keyword id="KW-0539">Nucleus</keyword>
<keyword id="KW-1185">Reference proteome</keyword>
<keyword id="KW-0690">Ribosome biogenesis</keyword>
<keyword id="KW-0698">rRNA processing</keyword>
<comment type="function">
    <text evidence="1">Component of the RIX1 complex required for processing of ITS2 sequences from 35S pre-rRNA.</text>
</comment>
<comment type="subunit">
    <text evidence="1">Component of the RIX1 complex, composed of IPI1, RIX1/IPI2 and IPI3 in a 1:2:2 stoichiometry. The complex interacts (via RIX1) with MDN1 (via its hexameric AAA ATPase ring) and the pre-60S ribosome particles.</text>
</comment>
<comment type="subcellular location">
    <subcellularLocation>
        <location evidence="1">Nucleus</location>
    </subcellularLocation>
</comment>
<comment type="similarity">
    <text evidence="3">Belongs to the IPI1/TEX10 family.</text>
</comment>
<protein>
    <recommendedName>
        <fullName>Pre-rRNA-processing protein IPI1-1</fullName>
    </recommendedName>
</protein>
<feature type="chain" id="PRO_0000308716" description="Pre-rRNA-processing protein IPI1-1">
    <location>
        <begin position="1"/>
        <end position="366"/>
    </location>
</feature>
<feature type="region of interest" description="Disordered" evidence="2">
    <location>
        <begin position="1"/>
        <end position="38"/>
    </location>
</feature>
<feature type="compositionally biased region" description="Polar residues" evidence="2">
    <location>
        <begin position="27"/>
        <end position="38"/>
    </location>
</feature>
<organism>
    <name type="scientific">Candida albicans (strain SC5314 / ATCC MYA-2876)</name>
    <name type="common">Yeast</name>
    <dbReference type="NCBI Taxonomy" id="237561"/>
    <lineage>
        <taxon>Eukaryota</taxon>
        <taxon>Fungi</taxon>
        <taxon>Dikarya</taxon>
        <taxon>Ascomycota</taxon>
        <taxon>Saccharomycotina</taxon>
        <taxon>Pichiomycetes</taxon>
        <taxon>Debaryomycetaceae</taxon>
        <taxon>Candida/Lodderomyces clade</taxon>
        <taxon>Candida</taxon>
    </lineage>
</organism>
<sequence>MASKRKRKEKQKDFAKAKLKVGKTAQKPDNYTDTSFKSKTISLPNQSIASSSNYGASSGASRSSLSTGPSLAVLTHQLSLTKHHSSNTRKEVLNYLQTHLPENPSYYKNIMTSILPLILDEDKEVRKALMSLLSAIFAKQPGLIDLHLRSTILFILSAMSHIIPNIRTTSTHFLRIIVENSHGNLINSYFVKIMRNWFVLMGWSLNEQDSKQLSMAVTTLSITAMNANSKQARIGHLQNLNKFLSKTLQHDQDKDKNKDMKLNITIHPQSYKYLLTDTVQPYQPLKLFVKEFKSEGSGSNGSGISMLDLNTISTEDLDTRKKIMNDVFKPLMIKNLNTFVKEGGEIGREANNCISIVTQACTSSSE</sequence>
<gene>
    <name type="primary">IPI1</name>
    <name type="ordered locus">CAALFM_CR03940WA</name>
    <name type="ORF">CaO19.379</name>
    <name type="ORF">CaO19.475</name>
    <name type="ORF">CaO19.8106</name>
</gene>